<sequence>MSEKTIAVKAQKVDEVADMFSNSVSAVVADVRGLTVAQADDLRAQLRDEGVSLKVIKNKILTRAAEKAGYQELNDLFKGPSAIAFSKEDVVAPARILKKFSGTADALELKGGVIDRKVADLDTINRYAALPSKETLLQQLLAEFQSPLRSFMYAVKAVAEKREADGETAETPAQETASDDSKSTKAEASDASTTENK</sequence>
<proteinExistence type="inferred from homology"/>
<keyword id="KW-1185">Reference proteome</keyword>
<keyword id="KW-0687">Ribonucleoprotein</keyword>
<keyword id="KW-0689">Ribosomal protein</keyword>
<keyword id="KW-0694">RNA-binding</keyword>
<keyword id="KW-0699">rRNA-binding</keyword>
<accession>Q04E44</accession>
<protein>
    <recommendedName>
        <fullName evidence="1">Large ribosomal subunit protein uL10</fullName>
    </recommendedName>
    <alternativeName>
        <fullName evidence="3">50S ribosomal protein L10</fullName>
    </alternativeName>
</protein>
<dbReference type="EMBL" id="CP000411">
    <property type="protein sequence ID" value="ABJ57278.1"/>
    <property type="molecule type" value="Genomic_DNA"/>
</dbReference>
<dbReference type="RefSeq" id="WP_002821736.1">
    <property type="nucleotide sequence ID" value="NC_008528.1"/>
</dbReference>
<dbReference type="SMR" id="Q04E44"/>
<dbReference type="STRING" id="203123.OEOE_1417"/>
<dbReference type="KEGG" id="ooe:OEOE_1417"/>
<dbReference type="eggNOG" id="COG0244">
    <property type="taxonomic scope" value="Bacteria"/>
</dbReference>
<dbReference type="HOGENOM" id="CLU_092227_2_0_9"/>
<dbReference type="Proteomes" id="UP000000774">
    <property type="component" value="Chromosome"/>
</dbReference>
<dbReference type="GO" id="GO:1990904">
    <property type="term" value="C:ribonucleoprotein complex"/>
    <property type="evidence" value="ECO:0007669"/>
    <property type="project" value="UniProtKB-KW"/>
</dbReference>
<dbReference type="GO" id="GO:0005840">
    <property type="term" value="C:ribosome"/>
    <property type="evidence" value="ECO:0007669"/>
    <property type="project" value="UniProtKB-KW"/>
</dbReference>
<dbReference type="GO" id="GO:0070180">
    <property type="term" value="F:large ribosomal subunit rRNA binding"/>
    <property type="evidence" value="ECO:0007669"/>
    <property type="project" value="UniProtKB-UniRule"/>
</dbReference>
<dbReference type="GO" id="GO:0006412">
    <property type="term" value="P:translation"/>
    <property type="evidence" value="ECO:0007669"/>
    <property type="project" value="UniProtKB-UniRule"/>
</dbReference>
<dbReference type="CDD" id="cd05797">
    <property type="entry name" value="Ribosomal_L10"/>
    <property type="match status" value="1"/>
</dbReference>
<dbReference type="Gene3D" id="3.30.70.1730">
    <property type="match status" value="1"/>
</dbReference>
<dbReference type="HAMAP" id="MF_00362">
    <property type="entry name" value="Ribosomal_uL10"/>
    <property type="match status" value="1"/>
</dbReference>
<dbReference type="InterPro" id="IPR001790">
    <property type="entry name" value="Ribosomal_uL10"/>
</dbReference>
<dbReference type="InterPro" id="IPR043141">
    <property type="entry name" value="Ribosomal_uL10-like_sf"/>
</dbReference>
<dbReference type="InterPro" id="IPR022973">
    <property type="entry name" value="Ribosomal_uL10_bac"/>
</dbReference>
<dbReference type="InterPro" id="IPR047865">
    <property type="entry name" value="Ribosomal_uL10_bac_type"/>
</dbReference>
<dbReference type="NCBIfam" id="NF000955">
    <property type="entry name" value="PRK00099.1-1"/>
    <property type="match status" value="1"/>
</dbReference>
<dbReference type="PANTHER" id="PTHR11560">
    <property type="entry name" value="39S RIBOSOMAL PROTEIN L10, MITOCHONDRIAL"/>
    <property type="match status" value="1"/>
</dbReference>
<dbReference type="Pfam" id="PF00466">
    <property type="entry name" value="Ribosomal_L10"/>
    <property type="match status" value="1"/>
</dbReference>
<dbReference type="SUPFAM" id="SSF160369">
    <property type="entry name" value="Ribosomal protein L10-like"/>
    <property type="match status" value="1"/>
</dbReference>
<organism>
    <name type="scientific">Oenococcus oeni (strain ATCC BAA-331 / PSU-1)</name>
    <dbReference type="NCBI Taxonomy" id="203123"/>
    <lineage>
        <taxon>Bacteria</taxon>
        <taxon>Bacillati</taxon>
        <taxon>Bacillota</taxon>
        <taxon>Bacilli</taxon>
        <taxon>Lactobacillales</taxon>
        <taxon>Lactobacillaceae</taxon>
        <taxon>Oenococcus</taxon>
    </lineage>
</organism>
<comment type="function">
    <text evidence="1">Forms part of the ribosomal stalk, playing a central role in the interaction of the ribosome with GTP-bound translation factors.</text>
</comment>
<comment type="subunit">
    <text evidence="1">Part of the ribosomal stalk of the 50S ribosomal subunit. The N-terminus interacts with L11 and the large rRNA to form the base of the stalk. The C-terminus forms an elongated spine to which L12 dimers bind in a sequential fashion forming a multimeric L10(L12)X complex.</text>
</comment>
<comment type="similarity">
    <text evidence="1">Belongs to the universal ribosomal protein uL10 family.</text>
</comment>
<evidence type="ECO:0000255" key="1">
    <source>
        <dbReference type="HAMAP-Rule" id="MF_00362"/>
    </source>
</evidence>
<evidence type="ECO:0000256" key="2">
    <source>
        <dbReference type="SAM" id="MobiDB-lite"/>
    </source>
</evidence>
<evidence type="ECO:0000305" key="3"/>
<feature type="chain" id="PRO_1000005548" description="Large ribosomal subunit protein uL10">
    <location>
        <begin position="1"/>
        <end position="197"/>
    </location>
</feature>
<feature type="region of interest" description="Disordered" evidence="2">
    <location>
        <begin position="162"/>
        <end position="197"/>
    </location>
</feature>
<feature type="compositionally biased region" description="Basic and acidic residues" evidence="2">
    <location>
        <begin position="179"/>
        <end position="188"/>
    </location>
</feature>
<reference key="1">
    <citation type="journal article" date="2006" name="Proc. Natl. Acad. Sci. U.S.A.">
        <title>Comparative genomics of the lactic acid bacteria.</title>
        <authorList>
            <person name="Makarova K.S."/>
            <person name="Slesarev A."/>
            <person name="Wolf Y.I."/>
            <person name="Sorokin A."/>
            <person name="Mirkin B."/>
            <person name="Koonin E.V."/>
            <person name="Pavlov A."/>
            <person name="Pavlova N."/>
            <person name="Karamychev V."/>
            <person name="Polouchine N."/>
            <person name="Shakhova V."/>
            <person name="Grigoriev I."/>
            <person name="Lou Y."/>
            <person name="Rohksar D."/>
            <person name="Lucas S."/>
            <person name="Huang K."/>
            <person name="Goodstein D.M."/>
            <person name="Hawkins T."/>
            <person name="Plengvidhya V."/>
            <person name="Welker D."/>
            <person name="Hughes J."/>
            <person name="Goh Y."/>
            <person name="Benson A."/>
            <person name="Baldwin K."/>
            <person name="Lee J.-H."/>
            <person name="Diaz-Muniz I."/>
            <person name="Dosti B."/>
            <person name="Smeianov V."/>
            <person name="Wechter W."/>
            <person name="Barabote R."/>
            <person name="Lorca G."/>
            <person name="Altermann E."/>
            <person name="Barrangou R."/>
            <person name="Ganesan B."/>
            <person name="Xie Y."/>
            <person name="Rawsthorne H."/>
            <person name="Tamir D."/>
            <person name="Parker C."/>
            <person name="Breidt F."/>
            <person name="Broadbent J.R."/>
            <person name="Hutkins R."/>
            <person name="O'Sullivan D."/>
            <person name="Steele J."/>
            <person name="Unlu G."/>
            <person name="Saier M.H. Jr."/>
            <person name="Klaenhammer T."/>
            <person name="Richardson P."/>
            <person name="Kozyavkin S."/>
            <person name="Weimer B.C."/>
            <person name="Mills D.A."/>
        </authorList>
    </citation>
    <scope>NUCLEOTIDE SEQUENCE [LARGE SCALE GENOMIC DNA]</scope>
    <source>
        <strain>ATCC BAA-331 / PSU-1</strain>
    </source>
</reference>
<name>RL10_OENOB</name>
<gene>
    <name evidence="1" type="primary">rplJ</name>
    <name type="ordered locus">OEOE_1417</name>
</gene>